<gene>
    <name evidence="3" type="primary">drtC</name>
    <name type="ORF">ASPCAL02979</name>
</gene>
<reference key="1">
    <citation type="journal article" date="2016" name="Genome Announc.">
        <title>Draft genome sequences of fungus Aspergillus calidoustus.</title>
        <authorList>
            <person name="Horn F."/>
            <person name="Linde J."/>
            <person name="Mattern D.J."/>
            <person name="Walther G."/>
            <person name="Guthke R."/>
            <person name="Scherlach K."/>
            <person name="Martin K."/>
            <person name="Brakhage A.A."/>
            <person name="Petzke L."/>
            <person name="Valiante V."/>
        </authorList>
    </citation>
    <scope>NUCLEOTIDE SEQUENCE [LARGE SCALE GENOMIC DNA]</scope>
    <source>
        <strain>SF006504</strain>
    </source>
</reference>
<reference key="2">
    <citation type="journal article" date="2021" name="Angew. Chem. Int. Ed.">
        <title>Biosynthesis of fungal drimane-type sesquiterpene esters.</title>
        <authorList>
            <person name="Huang Y."/>
            <person name="Hoefgen S."/>
            <person name="Valiante V."/>
        </authorList>
    </citation>
    <scope>FUNCTION</scope>
    <scope>DISRUPTION PHENOTYPE</scope>
    <scope>CATALYTIC ACTIVITY</scope>
    <scope>PATHWAY</scope>
</reference>
<proteinExistence type="evidence at protein level"/>
<keyword id="KW-0274">FAD</keyword>
<keyword id="KW-0285">Flavoprotein</keyword>
<keyword id="KW-0560">Oxidoreductase</keyword>
<keyword id="KW-1185">Reference proteome</keyword>
<organism>
    <name type="scientific">Aspergillus calidoustus</name>
    <dbReference type="NCBI Taxonomy" id="454130"/>
    <lineage>
        <taxon>Eukaryota</taxon>
        <taxon>Fungi</taxon>
        <taxon>Dikarya</taxon>
        <taxon>Ascomycota</taxon>
        <taxon>Pezizomycotina</taxon>
        <taxon>Eurotiomycetes</taxon>
        <taxon>Eurotiomycetidae</taxon>
        <taxon>Eurotiales</taxon>
        <taxon>Aspergillaceae</taxon>
        <taxon>Aspergillus</taxon>
        <taxon>Aspergillus subgen. Nidulantes</taxon>
    </lineage>
</organism>
<sequence length="523" mass="57042">MLFAKAFQSATVAGAVILAALVDVAHSTPLDDPGQCGLEAVAQCCTSLRESAVGDKVFAYGDIEYFRAKRSYYSVTTSLNSACIVLPESAEDVSTVLTTLTQPDLAETCPFAIRSGGHSMVVGFSDIAAGVTLDLSKLNHTIYHPETETVSLGPGGRWVNVYEELRPDNVMVSGGRFSSVGVGGFLTGGGITIYSAQRGLACDDVVSFDVVLANGTLIQATNATNPDLFHTLKGGSGNLGVVTNFEVRAFPQTQIWGGYTSYNVSKTPELARTLQNFTSNIEQDPKALLVTFWTYDTLTDVNRAANAMYYTDPVEYPEAFNDYYAIENISSTVHTRSIESLVTELEDTTNWFRVLFVTLAFKNDARVIEHGANLYQEYIDTIKANVSGGDWLVIAGFQPMPTLFGTSGQENGGNIIGLENNGDKIVLLFEAFWERTQDDELFEPLADELIHNLEEYARSLEQDSDFLYLNYADGWQDPISGYGGDNIEQLRAAAEKYDPNGVFQTQVPGGFKISKVPVAEQKK</sequence>
<comment type="function">
    <text evidence="2">FAD-dependent monooxygenase; part of the gene cluster that mediates the biosynthesis of various drimane-type sesquiterpene esters, compounds that exhibit diverse biological activities and are widely present in eukaryotes (PubMed:34468074). The pathway begins with the synthesis of the backbone drimenol by the terpene cyclase drtB using farnesyl pyrophosphate (FPP) as substrate (PubMed:34468074). The cytochrome P450 monooxygenase drtD is then responsible for the hydroxylations at C-6, C-9 and C-12, as well as the oxidation of hydroxyl groups at C-6 and C-11 to a ketone and an aldehyde, respectively (PubMed:34468074). Then, the biosynthesis can go in two directions, either the hydroxylated drimenol is further hydroxylated at C-2 and C-3 by an enzyme(s) not associated with the drt cluster, or the FAD-binding oxidoreductase drtC further oxidizes C-11 or C-12 to form the butyrolactone ring (PubMed:34468074). DrtB, drtD and drtC are solely responsible for the formation of the different drimane structures observed during drimane sesquiterpenes biosynthesis (PubMed:34468074). The polyketide synthase drtA synthesizes different lengths (C6 and C8) of PKS chains, which are then oxidized to varying degrees by the short-chain dehydrogenase drtF (PubMed:34468074). Finally, these PKS chains are transferred onto drimane sesquiterpenes by the acyltransferase drtE, forming the sesquiterpene esters (PubMed:34468074). In addition to the different fatty acyl-CoA chains produced by drtA, drtE is also able to use cinnamoyl-CoA as a substrate (PubMed:34468074).</text>
</comment>
<comment type="cofactor">
    <cofactor evidence="4">
        <name>FAD</name>
        <dbReference type="ChEBI" id="CHEBI:57692"/>
    </cofactor>
</comment>
<comment type="pathway">
    <text evidence="2">Secondary metabolite biosynthesis; terpenoid biosynthesis.</text>
</comment>
<comment type="disruption phenotype">
    <text evidence="2">Leads to disappearance of all compounds harboring a gamma-butyrolactone ring or containing a carboxylic acid at C-11, but accumulates ustusolate A.</text>
</comment>
<comment type="miscellaneous">
    <text evidence="2">The various drimane-type sesquiterpene esters produced by the A.calidoustus drt cluster include asperiene C, asperiene A, (6-Strobilactone-B) ester of (E,E)-6-carbonyl-7-hydroxy-2,4-octadienoic acid, ustusolate A, ustusolate C, ustusolide E, ustusoic acid A, (2'E,4'E)-6-(1'-carboxyhexa-2',4',-diene)-9-hydroxy-drim-7-ene-11,12-olide, RES-1149-2, as well as the 3 newly identified compounds calidoustene A, calidoustene B and calidoustene C.</text>
</comment>
<comment type="similarity">
    <text evidence="4">Belongs to the oxygen-dependent FAD-linked oxidoreductase family.</text>
</comment>
<dbReference type="EC" id="1.-.-.-" evidence="2"/>
<dbReference type="EMBL" id="CDMC01000002">
    <property type="protein sequence ID" value="CEN60543.1"/>
    <property type="molecule type" value="Genomic_DNA"/>
</dbReference>
<dbReference type="SMR" id="A0A0U5GQ05"/>
<dbReference type="OMA" id="ESTIFLW"/>
<dbReference type="OrthoDB" id="2151789at2759"/>
<dbReference type="UniPathway" id="UPA00213"/>
<dbReference type="Proteomes" id="UP000054771">
    <property type="component" value="Unassembled WGS sequence"/>
</dbReference>
<dbReference type="GO" id="GO:0071949">
    <property type="term" value="F:FAD binding"/>
    <property type="evidence" value="ECO:0007669"/>
    <property type="project" value="InterPro"/>
</dbReference>
<dbReference type="GO" id="GO:0016491">
    <property type="term" value="F:oxidoreductase activity"/>
    <property type="evidence" value="ECO:0007669"/>
    <property type="project" value="UniProtKB-KW"/>
</dbReference>
<dbReference type="GO" id="GO:0016114">
    <property type="term" value="P:terpenoid biosynthetic process"/>
    <property type="evidence" value="ECO:0007669"/>
    <property type="project" value="UniProtKB-UniPathway"/>
</dbReference>
<dbReference type="Gene3D" id="3.30.465.10">
    <property type="match status" value="1"/>
</dbReference>
<dbReference type="InterPro" id="IPR016166">
    <property type="entry name" value="FAD-bd_PCMH"/>
</dbReference>
<dbReference type="InterPro" id="IPR036318">
    <property type="entry name" value="FAD-bd_PCMH-like_sf"/>
</dbReference>
<dbReference type="InterPro" id="IPR016169">
    <property type="entry name" value="FAD-bd_PCMH_sub2"/>
</dbReference>
<dbReference type="InterPro" id="IPR050416">
    <property type="entry name" value="FAD-linked_Oxidoreductase"/>
</dbReference>
<dbReference type="InterPro" id="IPR006094">
    <property type="entry name" value="Oxid_FAD_bind_N"/>
</dbReference>
<dbReference type="PANTHER" id="PTHR42973">
    <property type="entry name" value="BINDING OXIDOREDUCTASE, PUTATIVE (AFU_ORTHOLOGUE AFUA_1G17690)-RELATED"/>
    <property type="match status" value="1"/>
</dbReference>
<dbReference type="PANTHER" id="PTHR42973:SF53">
    <property type="entry name" value="FAD-BINDING PCMH-TYPE DOMAIN-CONTAINING PROTEIN-RELATED"/>
    <property type="match status" value="1"/>
</dbReference>
<dbReference type="Pfam" id="PF01565">
    <property type="entry name" value="FAD_binding_4"/>
    <property type="match status" value="1"/>
</dbReference>
<dbReference type="SUPFAM" id="SSF56176">
    <property type="entry name" value="FAD-binding/transporter-associated domain-like"/>
    <property type="match status" value="1"/>
</dbReference>
<dbReference type="PROSITE" id="PS51387">
    <property type="entry name" value="FAD_PCMH"/>
    <property type="match status" value="1"/>
</dbReference>
<accession>A0A0U5GQ05</accession>
<name>DRTC_ASPCI</name>
<protein>
    <recommendedName>
        <fullName evidence="3">FAD-dependent monooxygenase drtC</fullName>
        <ecNumber evidence="2">1.-.-.-</ecNumber>
    </recommendedName>
    <alternativeName>
        <fullName evidence="3">Drimane-type sesquiterpene ester biosynthesis cluster protein C</fullName>
    </alternativeName>
</protein>
<evidence type="ECO:0000255" key="1">
    <source>
        <dbReference type="PROSITE-ProRule" id="PRU00718"/>
    </source>
</evidence>
<evidence type="ECO:0000269" key="2">
    <source>
    </source>
</evidence>
<evidence type="ECO:0000303" key="3">
    <source>
    </source>
</evidence>
<evidence type="ECO:0000305" key="4"/>
<feature type="chain" id="PRO_5006858084" description="FAD-dependent monooxygenase drtC">
    <location>
        <begin position="1"/>
        <end position="523"/>
    </location>
</feature>
<feature type="domain" description="FAD-binding PCMH-type" evidence="1">
    <location>
        <begin position="77"/>
        <end position="252"/>
    </location>
</feature>